<comment type="function">
    <text evidence="1">Involved in urease metallocenter assembly. Binds nickel. Probably functions as a nickel donor during metallocenter assembly.</text>
</comment>
<comment type="subcellular location">
    <subcellularLocation>
        <location evidence="1">Cytoplasm</location>
    </subcellularLocation>
</comment>
<comment type="similarity">
    <text evidence="1">Belongs to the UreE family.</text>
</comment>
<organism>
    <name type="scientific">Pseudomonas entomophila (strain L48)</name>
    <dbReference type="NCBI Taxonomy" id="384676"/>
    <lineage>
        <taxon>Bacteria</taxon>
        <taxon>Pseudomonadati</taxon>
        <taxon>Pseudomonadota</taxon>
        <taxon>Gammaproteobacteria</taxon>
        <taxon>Pseudomonadales</taxon>
        <taxon>Pseudomonadaceae</taxon>
        <taxon>Pseudomonas</taxon>
    </lineage>
</organism>
<evidence type="ECO:0000255" key="1">
    <source>
        <dbReference type="HAMAP-Rule" id="MF_00822"/>
    </source>
</evidence>
<proteinExistence type="inferred from homology"/>
<gene>
    <name evidence="1" type="primary">ureE</name>
    <name type="ordered locus">PSEEN2097</name>
</gene>
<name>UREE_PSEE4</name>
<reference key="1">
    <citation type="journal article" date="2006" name="Nat. Biotechnol.">
        <title>Complete genome sequence of the entomopathogenic and metabolically versatile soil bacterium Pseudomonas entomophila.</title>
        <authorList>
            <person name="Vodovar N."/>
            <person name="Vallenet D."/>
            <person name="Cruveiller S."/>
            <person name="Rouy Z."/>
            <person name="Barbe V."/>
            <person name="Acosta C."/>
            <person name="Cattolico L."/>
            <person name="Jubin C."/>
            <person name="Lajus A."/>
            <person name="Segurens B."/>
            <person name="Vacherie B."/>
            <person name="Wincker P."/>
            <person name="Weissenbach J."/>
            <person name="Lemaitre B."/>
            <person name="Medigue C."/>
            <person name="Boccard F."/>
        </authorList>
    </citation>
    <scope>NUCLEOTIDE SEQUENCE [LARGE SCALE GENOMIC DNA]</scope>
    <source>
        <strain>L48</strain>
    </source>
</reference>
<keyword id="KW-0143">Chaperone</keyword>
<keyword id="KW-0963">Cytoplasm</keyword>
<keyword id="KW-0533">Nickel</keyword>
<keyword id="KW-0996">Nickel insertion</keyword>
<accession>Q1IBN9</accession>
<dbReference type="EMBL" id="CT573326">
    <property type="protein sequence ID" value="CAK14926.1"/>
    <property type="molecule type" value="Genomic_DNA"/>
</dbReference>
<dbReference type="RefSeq" id="WP_011533329.1">
    <property type="nucleotide sequence ID" value="NC_008027.1"/>
</dbReference>
<dbReference type="SMR" id="Q1IBN9"/>
<dbReference type="STRING" id="384676.PSEEN2097"/>
<dbReference type="GeneID" id="32805305"/>
<dbReference type="KEGG" id="pen:PSEEN2097"/>
<dbReference type="eggNOG" id="COG2371">
    <property type="taxonomic scope" value="Bacteria"/>
</dbReference>
<dbReference type="HOGENOM" id="CLU_093757_2_0_6"/>
<dbReference type="OrthoDB" id="5421304at2"/>
<dbReference type="Proteomes" id="UP000000658">
    <property type="component" value="Chromosome"/>
</dbReference>
<dbReference type="GO" id="GO:0005737">
    <property type="term" value="C:cytoplasm"/>
    <property type="evidence" value="ECO:0007669"/>
    <property type="project" value="UniProtKB-SubCell"/>
</dbReference>
<dbReference type="GO" id="GO:0016151">
    <property type="term" value="F:nickel cation binding"/>
    <property type="evidence" value="ECO:0007669"/>
    <property type="project" value="UniProtKB-UniRule"/>
</dbReference>
<dbReference type="GO" id="GO:0051082">
    <property type="term" value="F:unfolded protein binding"/>
    <property type="evidence" value="ECO:0007669"/>
    <property type="project" value="UniProtKB-UniRule"/>
</dbReference>
<dbReference type="GO" id="GO:0006457">
    <property type="term" value="P:protein folding"/>
    <property type="evidence" value="ECO:0007669"/>
    <property type="project" value="InterPro"/>
</dbReference>
<dbReference type="GO" id="GO:0065003">
    <property type="term" value="P:protein-containing complex assembly"/>
    <property type="evidence" value="ECO:0007669"/>
    <property type="project" value="InterPro"/>
</dbReference>
<dbReference type="GO" id="GO:0019627">
    <property type="term" value="P:urea metabolic process"/>
    <property type="evidence" value="ECO:0007669"/>
    <property type="project" value="InterPro"/>
</dbReference>
<dbReference type="CDD" id="cd00571">
    <property type="entry name" value="UreE"/>
    <property type="match status" value="1"/>
</dbReference>
<dbReference type="Gene3D" id="2.60.260.20">
    <property type="entry name" value="Urease metallochaperone UreE, N-terminal domain"/>
    <property type="match status" value="1"/>
</dbReference>
<dbReference type="Gene3D" id="3.30.70.790">
    <property type="entry name" value="UreE, C-terminal domain"/>
    <property type="match status" value="1"/>
</dbReference>
<dbReference type="HAMAP" id="MF_00822">
    <property type="entry name" value="UreE"/>
    <property type="match status" value="1"/>
</dbReference>
<dbReference type="InterPro" id="IPR012406">
    <property type="entry name" value="UreE"/>
</dbReference>
<dbReference type="InterPro" id="IPR007864">
    <property type="entry name" value="UreE_C_dom"/>
</dbReference>
<dbReference type="InterPro" id="IPR004029">
    <property type="entry name" value="UreE_N"/>
</dbReference>
<dbReference type="InterPro" id="IPR036118">
    <property type="entry name" value="UreE_N_sf"/>
</dbReference>
<dbReference type="NCBIfam" id="NF009751">
    <property type="entry name" value="PRK13261.1-1"/>
    <property type="match status" value="1"/>
</dbReference>
<dbReference type="Pfam" id="PF05194">
    <property type="entry name" value="UreE_C"/>
    <property type="match status" value="1"/>
</dbReference>
<dbReference type="Pfam" id="PF02814">
    <property type="entry name" value="UreE_N"/>
    <property type="match status" value="1"/>
</dbReference>
<dbReference type="PIRSF" id="PIRSF036402">
    <property type="entry name" value="Ureas_acces_UreE"/>
    <property type="match status" value="1"/>
</dbReference>
<dbReference type="SMART" id="SM00988">
    <property type="entry name" value="UreE_N"/>
    <property type="match status" value="1"/>
</dbReference>
<dbReference type="SUPFAM" id="SSF69737">
    <property type="entry name" value="Urease metallochaperone UreE, C-terminal domain"/>
    <property type="match status" value="1"/>
</dbReference>
<dbReference type="SUPFAM" id="SSF69287">
    <property type="entry name" value="Urease metallochaperone UreE, N-terminal domain"/>
    <property type="match status" value="1"/>
</dbReference>
<sequence length="159" mass="17451">MIVFTRRITEADTVTGTLTLAVDSRIKSRLRVTLDDGREAGLMLERGHLLRGGELLADADGRQVVRVLAAPEAVSTVRCADPHLLARAAYHLGNRHVPLQIEPGLLRYQHDHVLDDMVRGLGLNVDAERAPFEPESGAYQSAPHGHGHDHPFVRLPAHS</sequence>
<feature type="chain" id="PRO_1000083904" description="Urease accessory protein UreE">
    <location>
        <begin position="1"/>
        <end position="159"/>
    </location>
</feature>
<protein>
    <recommendedName>
        <fullName evidence="1">Urease accessory protein UreE</fullName>
    </recommendedName>
</protein>